<sequence length="357" mass="40308">MEKKVICQDIFWSCDGTSFVSVHNDFGIRQYLVPEESNTDKLNRNLLLPFTRFFRNQSIVSCAIDPFYTLYNENSDRLAGDRIVVGGKNFPLQLYSLMDGQCILSYDTMNKINGEYETVYSVKIDVESRVYTGSCRNKVAIYDKSRRDAVWMNQSTKKASKGRQSIISCFEEQPMGGQALSRGSLLCGSYANEMFQVDCRHQRLERLNYTRTVAGGIVQILTSDNGRYVYVVRRNSDAISIYDRRNLQHELNVLRLPFRIHHNSAKLKAYIDTAYGLSMGTPQGTILNWGRDLVEFGGVPSHNSVEDPLITSIPPESEWRTNLDSTIPATVVKNCPGDPELFALSHGGTISLCRFGG</sequence>
<comment type="function">
    <text evidence="1">Involved in mRNA splicing. Helps to stabilize the U1 snRNP-5' splice site interaction (By similarity).</text>
</comment>
<comment type="subunit">
    <text evidence="1">Associates with snRNPs.</text>
</comment>
<comment type="subcellular location">
    <subcellularLocation>
        <location evidence="1">Nucleus</location>
    </subcellularLocation>
</comment>
<comment type="similarity">
    <text evidence="2">Belongs to the SWT21 family.</text>
</comment>
<dbReference type="EMBL" id="CH408049">
    <property type="protein sequence ID" value="EDV12431.1"/>
    <property type="molecule type" value="Genomic_DNA"/>
</dbReference>
<dbReference type="SMR" id="B3LP36"/>
<dbReference type="HOGENOM" id="CLU_662333_0_0_1"/>
<dbReference type="OrthoDB" id="38073at4893"/>
<dbReference type="Proteomes" id="UP000008335">
    <property type="component" value="Unassembled WGS sequence"/>
</dbReference>
<dbReference type="GO" id="GO:0005634">
    <property type="term" value="C:nucleus"/>
    <property type="evidence" value="ECO:0007669"/>
    <property type="project" value="UniProtKB-SubCell"/>
</dbReference>
<dbReference type="GO" id="GO:0006397">
    <property type="term" value="P:mRNA processing"/>
    <property type="evidence" value="ECO:0007669"/>
    <property type="project" value="UniProtKB-KW"/>
</dbReference>
<dbReference type="GO" id="GO:0008380">
    <property type="term" value="P:RNA splicing"/>
    <property type="evidence" value="ECO:0007669"/>
    <property type="project" value="UniProtKB-KW"/>
</dbReference>
<dbReference type="Gene3D" id="2.130.10.10">
    <property type="entry name" value="YVTN repeat-like/Quinoprotein amine dehydrogenase"/>
    <property type="match status" value="1"/>
</dbReference>
<dbReference type="InterPro" id="IPR051150">
    <property type="entry name" value="SWT21/TCAB1_mRNA_Telomere"/>
</dbReference>
<dbReference type="InterPro" id="IPR015943">
    <property type="entry name" value="WD40/YVTN_repeat-like_dom_sf"/>
</dbReference>
<dbReference type="InterPro" id="IPR036322">
    <property type="entry name" value="WD40_repeat_dom_sf"/>
</dbReference>
<dbReference type="PANTHER" id="PTHR13211">
    <property type="entry name" value="TELOMERASE CAJAL BODY PROTEIN 1"/>
    <property type="match status" value="1"/>
</dbReference>
<dbReference type="PANTHER" id="PTHR13211:SF0">
    <property type="entry name" value="TELOMERASE CAJAL BODY PROTEIN 1"/>
    <property type="match status" value="1"/>
</dbReference>
<dbReference type="SUPFAM" id="SSF50978">
    <property type="entry name" value="WD40 repeat-like"/>
    <property type="match status" value="1"/>
</dbReference>
<reference key="1">
    <citation type="submission" date="2005-03" db="EMBL/GenBank/DDBJ databases">
        <title>Annotation of the Saccharomyces cerevisiae RM11-1a genome.</title>
        <authorList>
            <consortium name="The Broad Institute Genome Sequencing Platform"/>
            <person name="Birren B.W."/>
            <person name="Lander E.S."/>
            <person name="Galagan J.E."/>
            <person name="Nusbaum C."/>
            <person name="Devon K."/>
            <person name="Cuomo C."/>
            <person name="Jaffe D.B."/>
            <person name="Butler J."/>
            <person name="Alvarez P."/>
            <person name="Gnerre S."/>
            <person name="Grabherr M."/>
            <person name="Kleber M."/>
            <person name="Mauceli E.W."/>
            <person name="Brockman W."/>
            <person name="MacCallum I.A."/>
            <person name="Rounsley S."/>
            <person name="Young S.K."/>
            <person name="LaButti K."/>
            <person name="Pushparaj V."/>
            <person name="DeCaprio D."/>
            <person name="Crawford M."/>
            <person name="Koehrsen M."/>
            <person name="Engels R."/>
            <person name="Montgomery P."/>
            <person name="Pearson M."/>
            <person name="Howarth C."/>
            <person name="Larson L."/>
            <person name="Luoma S."/>
            <person name="White J."/>
            <person name="O'Leary S."/>
            <person name="Kodira C.D."/>
            <person name="Zeng Q."/>
            <person name="Yandava C."/>
            <person name="Alvarado L."/>
            <person name="Pratt S."/>
            <person name="Kruglyak L."/>
        </authorList>
    </citation>
    <scope>NUCLEOTIDE SEQUENCE [LARGE SCALE GENOMIC DNA]</scope>
    <source>
        <strain>RM11-1a</strain>
    </source>
</reference>
<evidence type="ECO:0000250" key="1"/>
<evidence type="ECO:0000305" key="2"/>
<protein>
    <recommendedName>
        <fullName>Protein SWT21</fullName>
    </recommendedName>
    <alternativeName>
        <fullName>Synthetic With TGS1 protein 21</fullName>
    </alternativeName>
</protein>
<accession>B3LP36</accession>
<name>SWT21_YEAS1</name>
<keyword id="KW-0507">mRNA processing</keyword>
<keyword id="KW-0508">mRNA splicing</keyword>
<keyword id="KW-0539">Nucleus</keyword>
<organism>
    <name type="scientific">Saccharomyces cerevisiae (strain RM11-1a)</name>
    <name type="common">Baker's yeast</name>
    <dbReference type="NCBI Taxonomy" id="285006"/>
    <lineage>
        <taxon>Eukaryota</taxon>
        <taxon>Fungi</taxon>
        <taxon>Dikarya</taxon>
        <taxon>Ascomycota</taxon>
        <taxon>Saccharomycotina</taxon>
        <taxon>Saccharomycetes</taxon>
        <taxon>Saccharomycetales</taxon>
        <taxon>Saccharomycetaceae</taxon>
        <taxon>Saccharomyces</taxon>
    </lineage>
</organism>
<feature type="chain" id="PRO_0000405689" description="Protein SWT21">
    <location>
        <begin position="1"/>
        <end position="357"/>
    </location>
</feature>
<proteinExistence type="inferred from homology"/>
<gene>
    <name type="primary">SWT21</name>
    <name type="ORF">SCRG_03316</name>
</gene>